<feature type="chain" id="PRO_1000212999" description="Betaine aldehyde dehydrogenase">
    <location>
        <begin position="1"/>
        <end position="490"/>
    </location>
</feature>
<feature type="active site" description="Charge relay system" evidence="1">
    <location>
        <position position="162"/>
    </location>
</feature>
<feature type="active site" description="Proton acceptor" evidence="1">
    <location>
        <position position="252"/>
    </location>
</feature>
<feature type="active site" description="Nucleophile" evidence="1">
    <location>
        <position position="286"/>
    </location>
</feature>
<feature type="active site" description="Charge relay system" evidence="1">
    <location>
        <position position="464"/>
    </location>
</feature>
<feature type="binding site" evidence="1">
    <location>
        <position position="93"/>
    </location>
    <ligand>
        <name>K(+)</name>
        <dbReference type="ChEBI" id="CHEBI:29103"/>
        <label>1</label>
    </ligand>
</feature>
<feature type="binding site" evidence="1">
    <location>
        <begin position="150"/>
        <end position="152"/>
    </location>
    <ligand>
        <name>NAD(+)</name>
        <dbReference type="ChEBI" id="CHEBI:57540"/>
    </ligand>
</feature>
<feature type="binding site" evidence="1">
    <location>
        <begin position="176"/>
        <end position="179"/>
    </location>
    <ligand>
        <name>NAD(+)</name>
        <dbReference type="ChEBI" id="CHEBI:57540"/>
    </ligand>
</feature>
<feature type="binding site" evidence="1">
    <location>
        <position position="180"/>
    </location>
    <ligand>
        <name>K(+)</name>
        <dbReference type="ChEBI" id="CHEBI:29103"/>
        <label>1</label>
    </ligand>
</feature>
<feature type="binding site" evidence="1">
    <location>
        <begin position="230"/>
        <end position="233"/>
    </location>
    <ligand>
        <name>NAD(+)</name>
        <dbReference type="ChEBI" id="CHEBI:57540"/>
    </ligand>
</feature>
<feature type="binding site" evidence="1">
    <location>
        <position position="246"/>
    </location>
    <ligand>
        <name>K(+)</name>
        <dbReference type="ChEBI" id="CHEBI:29103"/>
        <label>2</label>
    </ligand>
</feature>
<feature type="binding site" evidence="1">
    <location>
        <position position="254"/>
    </location>
    <ligand>
        <name>NAD(+)</name>
        <dbReference type="ChEBI" id="CHEBI:57540"/>
    </ligand>
</feature>
<feature type="binding site" description="covalent" evidence="1">
    <location>
        <position position="286"/>
    </location>
    <ligand>
        <name>NAD(+)</name>
        <dbReference type="ChEBI" id="CHEBI:57540"/>
    </ligand>
</feature>
<feature type="binding site" evidence="1">
    <location>
        <position position="387"/>
    </location>
    <ligand>
        <name>NAD(+)</name>
        <dbReference type="ChEBI" id="CHEBI:57540"/>
    </ligand>
</feature>
<feature type="binding site" evidence="1">
    <location>
        <position position="457"/>
    </location>
    <ligand>
        <name>K(+)</name>
        <dbReference type="ChEBI" id="CHEBI:29103"/>
        <label>2</label>
    </ligand>
</feature>
<feature type="binding site" evidence="1">
    <location>
        <position position="460"/>
    </location>
    <ligand>
        <name>K(+)</name>
        <dbReference type="ChEBI" id="CHEBI:29103"/>
        <label>2</label>
    </ligand>
</feature>
<feature type="site" description="Seems to be a necessary countercharge to the potassium cations" evidence="1">
    <location>
        <position position="248"/>
    </location>
</feature>
<feature type="modified residue" description="Cysteine sulfenic acid (-SOH)" evidence="1">
    <location>
        <position position="286"/>
    </location>
</feature>
<proteinExistence type="inferred from homology"/>
<evidence type="ECO:0000255" key="1">
    <source>
        <dbReference type="HAMAP-Rule" id="MF_00804"/>
    </source>
</evidence>
<reference key="1">
    <citation type="submission" date="2009-07" db="EMBL/GenBank/DDBJ databases">
        <title>Complete sequence of Pectobacterium carotovorum subsp. carotovorum PC1.</title>
        <authorList>
            <consortium name="US DOE Joint Genome Institute"/>
            <person name="Lucas S."/>
            <person name="Copeland A."/>
            <person name="Lapidus A."/>
            <person name="Glavina del Rio T."/>
            <person name="Tice H."/>
            <person name="Bruce D."/>
            <person name="Goodwin L."/>
            <person name="Pitluck S."/>
            <person name="Munk A.C."/>
            <person name="Brettin T."/>
            <person name="Detter J.C."/>
            <person name="Han C."/>
            <person name="Tapia R."/>
            <person name="Larimer F."/>
            <person name="Land M."/>
            <person name="Hauser L."/>
            <person name="Kyrpides N."/>
            <person name="Mikhailova N."/>
            <person name="Balakrishnan V."/>
            <person name="Glasner J."/>
            <person name="Perna N.T."/>
        </authorList>
    </citation>
    <scope>NUCLEOTIDE SEQUENCE [LARGE SCALE GENOMIC DNA]</scope>
    <source>
        <strain>PC1</strain>
    </source>
</reference>
<accession>C6DKY5</accession>
<name>BETB_PECCP</name>
<dbReference type="EC" id="1.2.1.8" evidence="1"/>
<dbReference type="EMBL" id="CP001657">
    <property type="protein sequence ID" value="ACT13586.1"/>
    <property type="molecule type" value="Genomic_DNA"/>
</dbReference>
<dbReference type="RefSeq" id="WP_015840760.1">
    <property type="nucleotide sequence ID" value="NC_012917.1"/>
</dbReference>
<dbReference type="SMR" id="C6DKY5"/>
<dbReference type="STRING" id="561230.PC1_2555"/>
<dbReference type="KEGG" id="pct:PC1_2555"/>
<dbReference type="eggNOG" id="COG1012">
    <property type="taxonomic scope" value="Bacteria"/>
</dbReference>
<dbReference type="HOGENOM" id="CLU_005391_0_1_6"/>
<dbReference type="OrthoDB" id="9812625at2"/>
<dbReference type="UniPathway" id="UPA00529">
    <property type="reaction ID" value="UER00386"/>
</dbReference>
<dbReference type="Proteomes" id="UP000002736">
    <property type="component" value="Chromosome"/>
</dbReference>
<dbReference type="GO" id="GO:0008802">
    <property type="term" value="F:betaine-aldehyde dehydrogenase (NAD+) activity"/>
    <property type="evidence" value="ECO:0007669"/>
    <property type="project" value="UniProtKB-UniRule"/>
</dbReference>
<dbReference type="GO" id="GO:0046872">
    <property type="term" value="F:metal ion binding"/>
    <property type="evidence" value="ECO:0007669"/>
    <property type="project" value="UniProtKB-KW"/>
</dbReference>
<dbReference type="GO" id="GO:0019285">
    <property type="term" value="P:glycine betaine biosynthetic process from choline"/>
    <property type="evidence" value="ECO:0007669"/>
    <property type="project" value="UniProtKB-UniRule"/>
</dbReference>
<dbReference type="CDD" id="cd07090">
    <property type="entry name" value="ALDH_F9_TMBADH"/>
    <property type="match status" value="1"/>
</dbReference>
<dbReference type="FunFam" id="3.40.309.10:FF:000014">
    <property type="entry name" value="NAD/NADP-dependent betaine aldehyde dehydrogenase"/>
    <property type="match status" value="1"/>
</dbReference>
<dbReference type="FunFam" id="3.40.605.10:FF:000007">
    <property type="entry name" value="NAD/NADP-dependent betaine aldehyde dehydrogenase"/>
    <property type="match status" value="1"/>
</dbReference>
<dbReference type="Gene3D" id="3.40.605.10">
    <property type="entry name" value="Aldehyde Dehydrogenase, Chain A, domain 1"/>
    <property type="match status" value="1"/>
</dbReference>
<dbReference type="Gene3D" id="3.40.309.10">
    <property type="entry name" value="Aldehyde Dehydrogenase, Chain A, domain 2"/>
    <property type="match status" value="1"/>
</dbReference>
<dbReference type="HAMAP" id="MF_00804">
    <property type="entry name" value="BADH"/>
    <property type="match status" value="1"/>
</dbReference>
<dbReference type="InterPro" id="IPR016161">
    <property type="entry name" value="Ald_DH/histidinol_DH"/>
</dbReference>
<dbReference type="InterPro" id="IPR016163">
    <property type="entry name" value="Ald_DH_C"/>
</dbReference>
<dbReference type="InterPro" id="IPR016160">
    <property type="entry name" value="Ald_DH_CS_CYS"/>
</dbReference>
<dbReference type="InterPro" id="IPR029510">
    <property type="entry name" value="Ald_DH_CS_GLU"/>
</dbReference>
<dbReference type="InterPro" id="IPR016162">
    <property type="entry name" value="Ald_DH_N"/>
</dbReference>
<dbReference type="InterPro" id="IPR015590">
    <property type="entry name" value="Aldehyde_DH_dom"/>
</dbReference>
<dbReference type="InterPro" id="IPR011264">
    <property type="entry name" value="BADH"/>
</dbReference>
<dbReference type="NCBIfam" id="TIGR01804">
    <property type="entry name" value="BADH"/>
    <property type="match status" value="1"/>
</dbReference>
<dbReference type="NCBIfam" id="NF009725">
    <property type="entry name" value="PRK13252.1"/>
    <property type="match status" value="1"/>
</dbReference>
<dbReference type="PANTHER" id="PTHR11699">
    <property type="entry name" value="ALDEHYDE DEHYDROGENASE-RELATED"/>
    <property type="match status" value="1"/>
</dbReference>
<dbReference type="Pfam" id="PF00171">
    <property type="entry name" value="Aldedh"/>
    <property type="match status" value="1"/>
</dbReference>
<dbReference type="SUPFAM" id="SSF53720">
    <property type="entry name" value="ALDH-like"/>
    <property type="match status" value="1"/>
</dbReference>
<dbReference type="PROSITE" id="PS00070">
    <property type="entry name" value="ALDEHYDE_DEHYDR_CYS"/>
    <property type="match status" value="1"/>
</dbReference>
<dbReference type="PROSITE" id="PS00687">
    <property type="entry name" value="ALDEHYDE_DEHYDR_GLU"/>
    <property type="match status" value="1"/>
</dbReference>
<gene>
    <name evidence="1" type="primary">betB</name>
    <name type="ordered locus">PC1_2555</name>
</gene>
<sequence length="490" mass="52954">MSRYGLQQLYINGAYVDSTGDDTFDAVNPANGEIIAQLQSATVADVDRAVIAAAAGQKIWAAMTAMERSRILRRAVDILRERNDELALLETHDTGKPLSETRTVDIVTGADVLEYYAGLIPMLEGQQIPLRDTSFAYTRREPLGVVAGIGAWNYPIQIALWKSAPALAAGNAMIFKPSEVTSLTALKLAEVYTEAGLPAGVFNVLTGTGQSVGQALTTHPGIAKVSFTGGIASGKTVMANAAGSTLKDVTMELGGKSPLIVFEDADLDKAADIAMMANFFSSGQVCTNGTRVFVPQALQTQFEEKILARVQRIRIGNPTDEAVNFGPLVSFPHRESVLRYIESGKREGARVLVGGEPMTDEKYAQGAFVAPTVFTDCRDDMKIVREEIFGPVMSILTYQNEDEVIRRANDSEYGLAAGVVTGDLNRAHRVIHQLEAGICWINTWGESPAEMPVGGYKHSGVGRENGITTLEHYTQIKSVQVELGEFRSVF</sequence>
<comment type="function">
    <text evidence="1">Involved in the biosynthesis of the osmoprotectant glycine betaine. Catalyzes the irreversible oxidation of betaine aldehyde to the corresponding acid.</text>
</comment>
<comment type="catalytic activity">
    <reaction evidence="1">
        <text>betaine aldehyde + NAD(+) + H2O = glycine betaine + NADH + 2 H(+)</text>
        <dbReference type="Rhea" id="RHEA:15305"/>
        <dbReference type="ChEBI" id="CHEBI:15377"/>
        <dbReference type="ChEBI" id="CHEBI:15378"/>
        <dbReference type="ChEBI" id="CHEBI:15710"/>
        <dbReference type="ChEBI" id="CHEBI:17750"/>
        <dbReference type="ChEBI" id="CHEBI:57540"/>
        <dbReference type="ChEBI" id="CHEBI:57945"/>
        <dbReference type="EC" id="1.2.1.8"/>
    </reaction>
    <physiologicalReaction direction="left-to-right" evidence="1">
        <dbReference type="Rhea" id="RHEA:15306"/>
    </physiologicalReaction>
</comment>
<comment type="cofactor">
    <cofactor evidence="1">
        <name>K(+)</name>
        <dbReference type="ChEBI" id="CHEBI:29103"/>
    </cofactor>
    <text evidence="1">Binds 2 potassium ions per subunit.</text>
</comment>
<comment type="pathway">
    <text evidence="1">Amine and polyamine biosynthesis; betaine biosynthesis via choline pathway; betaine from betaine aldehyde: step 1/1.</text>
</comment>
<comment type="subunit">
    <text evidence="1">Dimer of dimers.</text>
</comment>
<comment type="similarity">
    <text evidence="1">Belongs to the aldehyde dehydrogenase family.</text>
</comment>
<protein>
    <recommendedName>
        <fullName evidence="1">Betaine aldehyde dehydrogenase</fullName>
        <shortName evidence="1">BADH</shortName>
        <ecNumber evidence="1">1.2.1.8</ecNumber>
    </recommendedName>
</protein>
<organism>
    <name type="scientific">Pectobacterium carotovorum subsp. carotovorum (strain PC1)</name>
    <dbReference type="NCBI Taxonomy" id="561230"/>
    <lineage>
        <taxon>Bacteria</taxon>
        <taxon>Pseudomonadati</taxon>
        <taxon>Pseudomonadota</taxon>
        <taxon>Gammaproteobacteria</taxon>
        <taxon>Enterobacterales</taxon>
        <taxon>Pectobacteriaceae</taxon>
        <taxon>Pectobacterium</taxon>
    </lineage>
</organism>
<keyword id="KW-0479">Metal-binding</keyword>
<keyword id="KW-0520">NAD</keyword>
<keyword id="KW-0521">NADP</keyword>
<keyword id="KW-0558">Oxidation</keyword>
<keyword id="KW-0560">Oxidoreductase</keyword>
<keyword id="KW-0630">Potassium</keyword>